<protein>
    <recommendedName>
        <fullName evidence="1">Thymidylate synthase</fullName>
        <shortName evidence="1">TS</shortName>
        <shortName evidence="1">TSase</shortName>
        <ecNumber evidence="1">2.1.1.45</ecNumber>
    </recommendedName>
</protein>
<proteinExistence type="inferred from homology"/>
<dbReference type="EC" id="2.1.1.45" evidence="1"/>
<dbReference type="EMBL" id="CR555306">
    <property type="protein sequence ID" value="CAI08631.1"/>
    <property type="molecule type" value="Genomic_DNA"/>
</dbReference>
<dbReference type="RefSeq" id="WP_011238317.1">
    <property type="nucleotide sequence ID" value="NC_006513.1"/>
</dbReference>
<dbReference type="SMR" id="Q5P233"/>
<dbReference type="STRING" id="76114.ebA4415"/>
<dbReference type="KEGG" id="eba:ebA4415"/>
<dbReference type="eggNOG" id="COG0207">
    <property type="taxonomic scope" value="Bacteria"/>
</dbReference>
<dbReference type="HOGENOM" id="CLU_021669_0_0_4"/>
<dbReference type="OrthoDB" id="9774633at2"/>
<dbReference type="UniPathway" id="UPA00575"/>
<dbReference type="Proteomes" id="UP000006552">
    <property type="component" value="Chromosome"/>
</dbReference>
<dbReference type="GO" id="GO:0005829">
    <property type="term" value="C:cytosol"/>
    <property type="evidence" value="ECO:0007669"/>
    <property type="project" value="TreeGrafter"/>
</dbReference>
<dbReference type="GO" id="GO:0004799">
    <property type="term" value="F:thymidylate synthase activity"/>
    <property type="evidence" value="ECO:0007669"/>
    <property type="project" value="UniProtKB-UniRule"/>
</dbReference>
<dbReference type="GO" id="GO:0006231">
    <property type="term" value="P:dTMP biosynthetic process"/>
    <property type="evidence" value="ECO:0007669"/>
    <property type="project" value="UniProtKB-UniRule"/>
</dbReference>
<dbReference type="GO" id="GO:0006235">
    <property type="term" value="P:dTTP biosynthetic process"/>
    <property type="evidence" value="ECO:0007669"/>
    <property type="project" value="UniProtKB-UniRule"/>
</dbReference>
<dbReference type="GO" id="GO:0032259">
    <property type="term" value="P:methylation"/>
    <property type="evidence" value="ECO:0007669"/>
    <property type="project" value="UniProtKB-KW"/>
</dbReference>
<dbReference type="CDD" id="cd00351">
    <property type="entry name" value="TS_Pyrimidine_HMase"/>
    <property type="match status" value="1"/>
</dbReference>
<dbReference type="FunFam" id="3.30.572.10:FF:000001">
    <property type="entry name" value="Thymidylate synthase"/>
    <property type="match status" value="1"/>
</dbReference>
<dbReference type="Gene3D" id="3.30.572.10">
    <property type="entry name" value="Thymidylate synthase/dCMP hydroxymethylase domain"/>
    <property type="match status" value="1"/>
</dbReference>
<dbReference type="HAMAP" id="MF_00008">
    <property type="entry name" value="Thymidy_synth_bact"/>
    <property type="match status" value="1"/>
</dbReference>
<dbReference type="InterPro" id="IPR045097">
    <property type="entry name" value="Thymidate_synth/dCMP_Mease"/>
</dbReference>
<dbReference type="InterPro" id="IPR023451">
    <property type="entry name" value="Thymidate_synth/dCMP_Mease_dom"/>
</dbReference>
<dbReference type="InterPro" id="IPR036926">
    <property type="entry name" value="Thymidate_synth/dCMP_Mease_sf"/>
</dbReference>
<dbReference type="InterPro" id="IPR000398">
    <property type="entry name" value="Thymidylate_synthase"/>
</dbReference>
<dbReference type="InterPro" id="IPR020940">
    <property type="entry name" value="Thymidylate_synthase_AS"/>
</dbReference>
<dbReference type="NCBIfam" id="NF002497">
    <property type="entry name" value="PRK01827.1-3"/>
    <property type="match status" value="1"/>
</dbReference>
<dbReference type="NCBIfam" id="NF002499">
    <property type="entry name" value="PRK01827.1-5"/>
    <property type="match status" value="1"/>
</dbReference>
<dbReference type="NCBIfam" id="TIGR03284">
    <property type="entry name" value="thym_sym"/>
    <property type="match status" value="2"/>
</dbReference>
<dbReference type="PANTHER" id="PTHR11548:SF9">
    <property type="entry name" value="THYMIDYLATE SYNTHASE"/>
    <property type="match status" value="1"/>
</dbReference>
<dbReference type="PANTHER" id="PTHR11548">
    <property type="entry name" value="THYMIDYLATE SYNTHASE 1"/>
    <property type="match status" value="1"/>
</dbReference>
<dbReference type="Pfam" id="PF00303">
    <property type="entry name" value="Thymidylat_synt"/>
    <property type="match status" value="1"/>
</dbReference>
<dbReference type="PRINTS" id="PR00108">
    <property type="entry name" value="THYMDSNTHASE"/>
</dbReference>
<dbReference type="SUPFAM" id="SSF55831">
    <property type="entry name" value="Thymidylate synthase/dCMP hydroxymethylase"/>
    <property type="match status" value="1"/>
</dbReference>
<dbReference type="PROSITE" id="PS00091">
    <property type="entry name" value="THYMIDYLATE_SYNTHASE"/>
    <property type="match status" value="1"/>
</dbReference>
<reference key="1">
    <citation type="journal article" date="2005" name="Arch. Microbiol.">
        <title>The genome sequence of an anaerobic aromatic-degrading denitrifying bacterium, strain EbN1.</title>
        <authorList>
            <person name="Rabus R."/>
            <person name="Kube M."/>
            <person name="Heider J."/>
            <person name="Beck A."/>
            <person name="Heitmann K."/>
            <person name="Widdel F."/>
            <person name="Reinhardt R."/>
        </authorList>
    </citation>
    <scope>NUCLEOTIDE SEQUENCE [LARGE SCALE GENOMIC DNA]</scope>
    <source>
        <strain>DSM 19018 / LMG 30748 / EbN1</strain>
    </source>
</reference>
<comment type="function">
    <text evidence="1">Catalyzes the reductive methylation of 2'-deoxyuridine-5'-monophosphate (dUMP) to 2'-deoxythymidine-5'-monophosphate (dTMP) while utilizing 5,10-methylenetetrahydrofolate (mTHF) as the methyl donor and reductant in the reaction, yielding dihydrofolate (DHF) as a by-product. This enzymatic reaction provides an intracellular de novo source of dTMP, an essential precursor for DNA biosynthesis.</text>
</comment>
<comment type="catalytic activity">
    <reaction evidence="1">
        <text>dUMP + (6R)-5,10-methylene-5,6,7,8-tetrahydrofolate = 7,8-dihydrofolate + dTMP</text>
        <dbReference type="Rhea" id="RHEA:12104"/>
        <dbReference type="ChEBI" id="CHEBI:15636"/>
        <dbReference type="ChEBI" id="CHEBI:57451"/>
        <dbReference type="ChEBI" id="CHEBI:63528"/>
        <dbReference type="ChEBI" id="CHEBI:246422"/>
        <dbReference type="EC" id="2.1.1.45"/>
    </reaction>
</comment>
<comment type="pathway">
    <text evidence="1">Pyrimidine metabolism; dTTP biosynthesis.</text>
</comment>
<comment type="subunit">
    <text evidence="1">Homodimer.</text>
</comment>
<comment type="subcellular location">
    <subcellularLocation>
        <location evidence="1">Cytoplasm</location>
    </subcellularLocation>
</comment>
<comment type="similarity">
    <text evidence="1">Belongs to the thymidylate synthase family. Bacterial-type ThyA subfamily.</text>
</comment>
<feature type="chain" id="PRO_0000140915" description="Thymidylate synthase">
    <location>
        <begin position="1"/>
        <end position="264"/>
    </location>
</feature>
<feature type="active site" description="Nucleophile" evidence="1">
    <location>
        <position position="146"/>
    </location>
</feature>
<feature type="binding site" description="in other chain" evidence="1">
    <location>
        <position position="21"/>
    </location>
    <ligand>
        <name>dUMP</name>
        <dbReference type="ChEBI" id="CHEBI:246422"/>
        <note>ligand shared between dimeric partners</note>
    </ligand>
</feature>
<feature type="binding site" evidence="1">
    <location>
        <position position="51"/>
    </location>
    <ligand>
        <name>(6R)-5,10-methylene-5,6,7,8-tetrahydrofolate</name>
        <dbReference type="ChEBI" id="CHEBI:15636"/>
    </ligand>
</feature>
<feature type="binding site" evidence="1">
    <location>
        <begin position="126"/>
        <end position="127"/>
    </location>
    <ligand>
        <name>dUMP</name>
        <dbReference type="ChEBI" id="CHEBI:246422"/>
        <note>ligand shared between dimeric partners</note>
    </ligand>
</feature>
<feature type="binding site" description="in other chain" evidence="1">
    <location>
        <begin position="166"/>
        <end position="169"/>
    </location>
    <ligand>
        <name>dUMP</name>
        <dbReference type="ChEBI" id="CHEBI:246422"/>
        <note>ligand shared between dimeric partners</note>
    </ligand>
</feature>
<feature type="binding site" evidence="1">
    <location>
        <position position="169"/>
    </location>
    <ligand>
        <name>(6R)-5,10-methylene-5,6,7,8-tetrahydrofolate</name>
        <dbReference type="ChEBI" id="CHEBI:15636"/>
    </ligand>
</feature>
<feature type="binding site" description="in other chain" evidence="1">
    <location>
        <position position="177"/>
    </location>
    <ligand>
        <name>dUMP</name>
        <dbReference type="ChEBI" id="CHEBI:246422"/>
        <note>ligand shared between dimeric partners</note>
    </ligand>
</feature>
<feature type="binding site" description="in other chain" evidence="1">
    <location>
        <begin position="207"/>
        <end position="209"/>
    </location>
    <ligand>
        <name>dUMP</name>
        <dbReference type="ChEBI" id="CHEBI:246422"/>
        <note>ligand shared between dimeric partners</note>
    </ligand>
</feature>
<feature type="binding site" evidence="1">
    <location>
        <position position="263"/>
    </location>
    <ligand>
        <name>(6R)-5,10-methylene-5,6,7,8-tetrahydrofolate</name>
        <dbReference type="ChEBI" id="CHEBI:15636"/>
    </ligand>
</feature>
<keyword id="KW-0963">Cytoplasm</keyword>
<keyword id="KW-0489">Methyltransferase</keyword>
<keyword id="KW-0545">Nucleotide biosynthesis</keyword>
<keyword id="KW-1185">Reference proteome</keyword>
<keyword id="KW-0808">Transferase</keyword>
<gene>
    <name evidence="1" type="primary">thyA</name>
    <name type="ordered locus">AZOSEA25060</name>
    <name type="ORF">ebA4415</name>
</gene>
<name>TYSY_AROAE</name>
<organism>
    <name type="scientific">Aromatoleum aromaticum (strain DSM 19018 / LMG 30748 / EbN1)</name>
    <name type="common">Azoarcus sp. (strain EbN1)</name>
    <dbReference type="NCBI Taxonomy" id="76114"/>
    <lineage>
        <taxon>Bacteria</taxon>
        <taxon>Pseudomonadati</taxon>
        <taxon>Pseudomonadota</taxon>
        <taxon>Betaproteobacteria</taxon>
        <taxon>Rhodocyclales</taxon>
        <taxon>Rhodocyclaceae</taxon>
        <taxon>Aromatoleum</taxon>
    </lineage>
</organism>
<sequence>MKQYLDLMRHVLDHGDRKSDRTGTGTLSIFGWQMRFNLDDGFPLLTTKKLHTRSIIHELLWFLRGDTNIRYLNENGVSIWDDWADENGDLGPVYGKQWRRWETANGATIDQIAQLIDGLKHNPDSRRHLVSAWNPGEVAGMALPPCHALFQFYVAGDRLSCQLYQRSADIFLGVPFNIASYALLTLMVAQVCGLRAGDFVWTGGDCHLYLNHLDQARLQLSRQPRALPRMIVNPGVTDIFGFRFEDFRLEGYDPHPHIKAEVAV</sequence>
<accession>Q5P233</accession>
<evidence type="ECO:0000255" key="1">
    <source>
        <dbReference type="HAMAP-Rule" id="MF_00008"/>
    </source>
</evidence>